<keyword id="KW-0233">DNA recombination</keyword>
<keyword id="KW-0238">DNA-binding</keyword>
<keyword id="KW-1185">Reference proteome</keyword>
<keyword id="KW-0804">Transcription</keyword>
<keyword id="KW-0805">Transcription regulation</keyword>
<keyword id="KW-0810">Translation regulation</keyword>
<organism>
    <name type="scientific">Shigella sonnei (strain Ss046)</name>
    <dbReference type="NCBI Taxonomy" id="300269"/>
    <lineage>
        <taxon>Bacteria</taxon>
        <taxon>Pseudomonadati</taxon>
        <taxon>Pseudomonadota</taxon>
        <taxon>Gammaproteobacteria</taxon>
        <taxon>Enterobacterales</taxon>
        <taxon>Enterobacteriaceae</taxon>
        <taxon>Shigella</taxon>
    </lineage>
</organism>
<evidence type="ECO:0000255" key="1">
    <source>
        <dbReference type="HAMAP-Rule" id="MF_00380"/>
    </source>
</evidence>
<evidence type="ECO:0000256" key="2">
    <source>
        <dbReference type="SAM" id="MobiDB-lite"/>
    </source>
</evidence>
<sequence>MALTKAEMSEYLFDKLGLSKRDAKELVELFFEEIRRALENGEQVKLSGFGNFDLRDKNQRPGRNPKTGEDIPITARRVVTFRPGQKLKSRVENASPKDE</sequence>
<name>IHFA_SHISS</name>
<gene>
    <name evidence="1" type="primary">ihfA</name>
    <name evidence="1" type="synonym">himA</name>
    <name type="ordered locus">SSON_1446</name>
</gene>
<feature type="chain" id="PRO_0000277781" description="Integration host factor subunit alpha">
    <location>
        <begin position="1"/>
        <end position="99"/>
    </location>
</feature>
<feature type="region of interest" description="Disordered" evidence="2">
    <location>
        <begin position="49"/>
        <end position="73"/>
    </location>
</feature>
<dbReference type="EMBL" id="CP000038">
    <property type="protein sequence ID" value="AAZ88152.1"/>
    <property type="molecule type" value="Genomic_DNA"/>
</dbReference>
<dbReference type="RefSeq" id="WP_001229265.1">
    <property type="nucleotide sequence ID" value="NC_007384.1"/>
</dbReference>
<dbReference type="SMR" id="Q3Z260"/>
<dbReference type="GeneID" id="93775925"/>
<dbReference type="KEGG" id="ssn:SSON_1446"/>
<dbReference type="HOGENOM" id="CLU_105066_1_3_6"/>
<dbReference type="Proteomes" id="UP000002529">
    <property type="component" value="Chromosome"/>
</dbReference>
<dbReference type="GO" id="GO:0005829">
    <property type="term" value="C:cytosol"/>
    <property type="evidence" value="ECO:0007669"/>
    <property type="project" value="TreeGrafter"/>
</dbReference>
<dbReference type="GO" id="GO:0003677">
    <property type="term" value="F:DNA binding"/>
    <property type="evidence" value="ECO:0007669"/>
    <property type="project" value="UniProtKB-UniRule"/>
</dbReference>
<dbReference type="GO" id="GO:0030527">
    <property type="term" value="F:structural constituent of chromatin"/>
    <property type="evidence" value="ECO:0007669"/>
    <property type="project" value="InterPro"/>
</dbReference>
<dbReference type="GO" id="GO:0006310">
    <property type="term" value="P:DNA recombination"/>
    <property type="evidence" value="ECO:0007669"/>
    <property type="project" value="UniProtKB-UniRule"/>
</dbReference>
<dbReference type="GO" id="GO:0009893">
    <property type="term" value="P:positive regulation of metabolic process"/>
    <property type="evidence" value="ECO:0007669"/>
    <property type="project" value="UniProtKB-ARBA"/>
</dbReference>
<dbReference type="GO" id="GO:0006355">
    <property type="term" value="P:regulation of DNA-templated transcription"/>
    <property type="evidence" value="ECO:0007669"/>
    <property type="project" value="UniProtKB-UniRule"/>
</dbReference>
<dbReference type="GO" id="GO:0006417">
    <property type="term" value="P:regulation of translation"/>
    <property type="evidence" value="ECO:0007669"/>
    <property type="project" value="UniProtKB-UniRule"/>
</dbReference>
<dbReference type="CDD" id="cd13835">
    <property type="entry name" value="IHF_A"/>
    <property type="match status" value="1"/>
</dbReference>
<dbReference type="FunFam" id="4.10.520.10:FF:000002">
    <property type="entry name" value="Integration host factor subunit alpha"/>
    <property type="match status" value="1"/>
</dbReference>
<dbReference type="Gene3D" id="4.10.520.10">
    <property type="entry name" value="IHF-like DNA-binding proteins"/>
    <property type="match status" value="1"/>
</dbReference>
<dbReference type="HAMAP" id="MF_00380">
    <property type="entry name" value="IHF_alpha"/>
    <property type="match status" value="1"/>
</dbReference>
<dbReference type="InterPro" id="IPR000119">
    <property type="entry name" value="Hist_DNA-bd"/>
</dbReference>
<dbReference type="InterPro" id="IPR020816">
    <property type="entry name" value="Histone-like_DNA-bd_CS"/>
</dbReference>
<dbReference type="InterPro" id="IPR010992">
    <property type="entry name" value="IHF-like_DNA-bd_dom_sf"/>
</dbReference>
<dbReference type="InterPro" id="IPR005684">
    <property type="entry name" value="IHF_alpha"/>
</dbReference>
<dbReference type="NCBIfam" id="TIGR00987">
    <property type="entry name" value="himA"/>
    <property type="match status" value="1"/>
</dbReference>
<dbReference type="NCBIfam" id="NF001401">
    <property type="entry name" value="PRK00285.1"/>
    <property type="match status" value="1"/>
</dbReference>
<dbReference type="PANTHER" id="PTHR33175">
    <property type="entry name" value="DNA-BINDING PROTEIN HU"/>
    <property type="match status" value="1"/>
</dbReference>
<dbReference type="PANTHER" id="PTHR33175:SF2">
    <property type="entry name" value="INTEGRATION HOST FACTOR SUBUNIT ALPHA"/>
    <property type="match status" value="1"/>
</dbReference>
<dbReference type="Pfam" id="PF00216">
    <property type="entry name" value="Bac_DNA_binding"/>
    <property type="match status" value="1"/>
</dbReference>
<dbReference type="PRINTS" id="PR01727">
    <property type="entry name" value="DNABINDINGHU"/>
</dbReference>
<dbReference type="SMART" id="SM00411">
    <property type="entry name" value="BHL"/>
    <property type="match status" value="1"/>
</dbReference>
<dbReference type="SUPFAM" id="SSF47729">
    <property type="entry name" value="IHF-like DNA-binding proteins"/>
    <property type="match status" value="1"/>
</dbReference>
<dbReference type="PROSITE" id="PS00045">
    <property type="entry name" value="HISTONE_LIKE"/>
    <property type="match status" value="1"/>
</dbReference>
<protein>
    <recommendedName>
        <fullName evidence="1">Integration host factor subunit alpha</fullName>
        <shortName evidence="1">IHF-alpha</shortName>
    </recommendedName>
</protein>
<proteinExistence type="inferred from homology"/>
<comment type="function">
    <text evidence="1">This protein is one of the two subunits of integration host factor, a specific DNA-binding protein that functions in genetic recombination as well as in transcriptional and translational control.</text>
</comment>
<comment type="subunit">
    <text evidence="1">Heterodimer of an alpha and a beta chain.</text>
</comment>
<comment type="similarity">
    <text evidence="1">Belongs to the bacterial histone-like protein family.</text>
</comment>
<reference key="1">
    <citation type="journal article" date="2005" name="Nucleic Acids Res.">
        <title>Genome dynamics and diversity of Shigella species, the etiologic agents of bacillary dysentery.</title>
        <authorList>
            <person name="Yang F."/>
            <person name="Yang J."/>
            <person name="Zhang X."/>
            <person name="Chen L."/>
            <person name="Jiang Y."/>
            <person name="Yan Y."/>
            <person name="Tang X."/>
            <person name="Wang J."/>
            <person name="Xiong Z."/>
            <person name="Dong J."/>
            <person name="Xue Y."/>
            <person name="Zhu Y."/>
            <person name="Xu X."/>
            <person name="Sun L."/>
            <person name="Chen S."/>
            <person name="Nie H."/>
            <person name="Peng J."/>
            <person name="Xu J."/>
            <person name="Wang Y."/>
            <person name="Yuan Z."/>
            <person name="Wen Y."/>
            <person name="Yao Z."/>
            <person name="Shen Y."/>
            <person name="Qiang B."/>
            <person name="Hou Y."/>
            <person name="Yu J."/>
            <person name="Jin Q."/>
        </authorList>
    </citation>
    <scope>NUCLEOTIDE SEQUENCE [LARGE SCALE GENOMIC DNA]</scope>
    <source>
        <strain>Ss046</strain>
    </source>
</reference>
<accession>Q3Z260</accession>